<protein>
    <recommendedName>
        <fullName evidence="1">ATP-dependent lipid A-core flippase</fullName>
        <ecNumber evidence="1">7.5.2.6</ecNumber>
    </recommendedName>
    <alternativeName>
        <fullName evidence="1">Lipid A export ATP-binding/permease protein MsbA</fullName>
    </alternativeName>
</protein>
<organism>
    <name type="scientific">Albidiferax ferrireducens (strain ATCC BAA-621 / DSM 15236 / T118)</name>
    <name type="common">Rhodoferax ferrireducens</name>
    <dbReference type="NCBI Taxonomy" id="338969"/>
    <lineage>
        <taxon>Bacteria</taxon>
        <taxon>Pseudomonadati</taxon>
        <taxon>Pseudomonadota</taxon>
        <taxon>Betaproteobacteria</taxon>
        <taxon>Burkholderiales</taxon>
        <taxon>Comamonadaceae</taxon>
        <taxon>Rhodoferax</taxon>
    </lineage>
</organism>
<gene>
    <name evidence="1" type="primary">msbA</name>
    <name type="ordered locus">Rfer_2090</name>
</gene>
<comment type="function">
    <text evidence="1">Involved in lipopolysaccharide (LPS) biosynthesis. Translocates lipid A-core from the inner to the outer leaflet of the inner membrane. Transmembrane domains (TMD) form a pore in the inner membrane and the ATP-binding domain (NBD) is responsible for energy generation.</text>
</comment>
<comment type="catalytic activity">
    <reaction evidence="1">
        <text>ATP + H2O + lipid A-core oligosaccharideSide 1 = ADP + phosphate + lipid A-core oligosaccharideSide 2.</text>
        <dbReference type="EC" id="7.5.2.6"/>
    </reaction>
</comment>
<comment type="subunit">
    <text evidence="1">Homodimer.</text>
</comment>
<comment type="subcellular location">
    <subcellularLocation>
        <location evidence="1">Cell inner membrane</location>
        <topology evidence="1">Multi-pass membrane protein</topology>
    </subcellularLocation>
</comment>
<comment type="domain">
    <text evidence="1">In MsbA the ATP-binding domain (NBD) and the transmembrane domain (TMD) are fused.</text>
</comment>
<comment type="similarity">
    <text evidence="1">Belongs to the ABC transporter superfamily. Lipid exporter (TC 3.A.1.106) family.</text>
</comment>
<sequence>MTKPISLSNRALYARLLSYVRPYWKAVFLAVIGMVGTAATEPVFPAIMKYLLDNGFQAKDARMVWLIPMGIVTLFLVRSVIVYCTGYLMTWISSRLVTDLRRTMFAKLLALPTHHYDEHSAGQMISRLVYDVSNVTDAATSALITLVRESLTAIALIGYLLYLDWKLTLITLAIGPVIAFTVKSFSKRMRAASQKSLQAMRFISHTIEETISAQQVVKIFGGQERQQKQFFEATEQFRRAQMREAIPASAMTPITHIAASVAVAIIAFLALSQSTGQAGASAGSFISFITAMLMLISPVKQLATVNPTIQRGLAASESIFELLDAAQEDDRGKRQLLRSKGEICFDNVSLRYLGAERFALNDISFRITAGQTVALVGASGGGKSTISALIPRFYPVTSGRVLVDGIDINDITLASLRQNIALVSQNVILFNDTVGANIAYGSLQTCSRDDVIRAARAANAWDFIEQLPNGLDTPIGENGAKLSGGQRQRLAIARALLKDAPILILDEATSALDTESERQVQAALAVLMKNRTTLVIAHRLSTIEHADCILVLDQGRIVETGTHAELLRAGSYYANLSRLQG</sequence>
<feature type="chain" id="PRO_0000271648" description="ATP-dependent lipid A-core flippase">
    <location>
        <begin position="1"/>
        <end position="581"/>
    </location>
</feature>
<feature type="transmembrane region" description="Helical" evidence="1">
    <location>
        <begin position="27"/>
        <end position="47"/>
    </location>
</feature>
<feature type="transmembrane region" description="Helical" evidence="1">
    <location>
        <begin position="63"/>
        <end position="83"/>
    </location>
</feature>
<feature type="transmembrane region" description="Helical" evidence="1">
    <location>
        <begin position="154"/>
        <end position="174"/>
    </location>
</feature>
<feature type="transmembrane region" description="Helical" evidence="1">
    <location>
        <begin position="251"/>
        <end position="271"/>
    </location>
</feature>
<feature type="transmembrane region" description="Helical" evidence="1">
    <location>
        <begin position="279"/>
        <end position="299"/>
    </location>
</feature>
<feature type="domain" description="ABC transmembrane type-1" evidence="1">
    <location>
        <begin position="28"/>
        <end position="311"/>
    </location>
</feature>
<feature type="domain" description="ABC transporter" evidence="1">
    <location>
        <begin position="343"/>
        <end position="579"/>
    </location>
</feature>
<feature type="binding site" evidence="1">
    <location>
        <begin position="377"/>
        <end position="384"/>
    </location>
    <ligand>
        <name>ATP</name>
        <dbReference type="ChEBI" id="CHEBI:30616"/>
    </ligand>
</feature>
<name>MSBA_ALBFT</name>
<keyword id="KW-0067">ATP-binding</keyword>
<keyword id="KW-0997">Cell inner membrane</keyword>
<keyword id="KW-1003">Cell membrane</keyword>
<keyword id="KW-0445">Lipid transport</keyword>
<keyword id="KW-0472">Membrane</keyword>
<keyword id="KW-0547">Nucleotide-binding</keyword>
<keyword id="KW-1185">Reference proteome</keyword>
<keyword id="KW-1278">Translocase</keyword>
<keyword id="KW-0812">Transmembrane</keyword>
<keyword id="KW-1133">Transmembrane helix</keyword>
<keyword id="KW-0813">Transport</keyword>
<accession>Q21WN9</accession>
<dbReference type="EC" id="7.5.2.6" evidence="1"/>
<dbReference type="EMBL" id="CP000267">
    <property type="protein sequence ID" value="ABD69814.1"/>
    <property type="molecule type" value="Genomic_DNA"/>
</dbReference>
<dbReference type="RefSeq" id="WP_011464382.1">
    <property type="nucleotide sequence ID" value="NC_007908.1"/>
</dbReference>
<dbReference type="SMR" id="Q21WN9"/>
<dbReference type="STRING" id="338969.Rfer_2090"/>
<dbReference type="KEGG" id="rfr:Rfer_2090"/>
<dbReference type="eggNOG" id="COG1132">
    <property type="taxonomic scope" value="Bacteria"/>
</dbReference>
<dbReference type="HOGENOM" id="CLU_000604_84_3_4"/>
<dbReference type="OrthoDB" id="8554730at2"/>
<dbReference type="Proteomes" id="UP000008332">
    <property type="component" value="Chromosome"/>
</dbReference>
<dbReference type="GO" id="GO:0005886">
    <property type="term" value="C:plasma membrane"/>
    <property type="evidence" value="ECO:0007669"/>
    <property type="project" value="UniProtKB-SubCell"/>
</dbReference>
<dbReference type="GO" id="GO:0015421">
    <property type="term" value="F:ABC-type oligopeptide transporter activity"/>
    <property type="evidence" value="ECO:0007669"/>
    <property type="project" value="TreeGrafter"/>
</dbReference>
<dbReference type="GO" id="GO:0005524">
    <property type="term" value="F:ATP binding"/>
    <property type="evidence" value="ECO:0007669"/>
    <property type="project" value="UniProtKB-KW"/>
</dbReference>
<dbReference type="GO" id="GO:0016887">
    <property type="term" value="F:ATP hydrolysis activity"/>
    <property type="evidence" value="ECO:0007669"/>
    <property type="project" value="InterPro"/>
</dbReference>
<dbReference type="GO" id="GO:0034040">
    <property type="term" value="F:ATPase-coupled lipid transmembrane transporter activity"/>
    <property type="evidence" value="ECO:0007669"/>
    <property type="project" value="InterPro"/>
</dbReference>
<dbReference type="CDD" id="cd18552">
    <property type="entry name" value="ABC_6TM_MsbA_like"/>
    <property type="match status" value="1"/>
</dbReference>
<dbReference type="CDD" id="cd03251">
    <property type="entry name" value="ABCC_MsbA"/>
    <property type="match status" value="1"/>
</dbReference>
<dbReference type="FunFam" id="3.40.50.300:FF:000140">
    <property type="entry name" value="Lipid A export ATP-binding/permease protein MsbA"/>
    <property type="match status" value="1"/>
</dbReference>
<dbReference type="Gene3D" id="1.20.1560.10">
    <property type="entry name" value="ABC transporter type 1, transmembrane domain"/>
    <property type="match status" value="1"/>
</dbReference>
<dbReference type="Gene3D" id="3.40.50.300">
    <property type="entry name" value="P-loop containing nucleotide triphosphate hydrolases"/>
    <property type="match status" value="1"/>
</dbReference>
<dbReference type="InterPro" id="IPR003593">
    <property type="entry name" value="AAA+_ATPase"/>
</dbReference>
<dbReference type="InterPro" id="IPR011527">
    <property type="entry name" value="ABC1_TM_dom"/>
</dbReference>
<dbReference type="InterPro" id="IPR036640">
    <property type="entry name" value="ABC1_TM_sf"/>
</dbReference>
<dbReference type="InterPro" id="IPR003439">
    <property type="entry name" value="ABC_transporter-like_ATP-bd"/>
</dbReference>
<dbReference type="InterPro" id="IPR017871">
    <property type="entry name" value="ABC_transporter-like_CS"/>
</dbReference>
<dbReference type="InterPro" id="IPR011917">
    <property type="entry name" value="ABC_transpr_lipidA"/>
</dbReference>
<dbReference type="InterPro" id="IPR027417">
    <property type="entry name" value="P-loop_NTPase"/>
</dbReference>
<dbReference type="InterPro" id="IPR039421">
    <property type="entry name" value="Type_1_exporter"/>
</dbReference>
<dbReference type="NCBIfam" id="TIGR02203">
    <property type="entry name" value="MsbA_lipidA"/>
    <property type="match status" value="1"/>
</dbReference>
<dbReference type="PANTHER" id="PTHR43394:SF1">
    <property type="entry name" value="ATP-BINDING CASSETTE SUB-FAMILY B MEMBER 10, MITOCHONDRIAL"/>
    <property type="match status" value="1"/>
</dbReference>
<dbReference type="PANTHER" id="PTHR43394">
    <property type="entry name" value="ATP-DEPENDENT PERMEASE MDL1, MITOCHONDRIAL"/>
    <property type="match status" value="1"/>
</dbReference>
<dbReference type="Pfam" id="PF00664">
    <property type="entry name" value="ABC_membrane"/>
    <property type="match status" value="1"/>
</dbReference>
<dbReference type="Pfam" id="PF00005">
    <property type="entry name" value="ABC_tran"/>
    <property type="match status" value="1"/>
</dbReference>
<dbReference type="SMART" id="SM00382">
    <property type="entry name" value="AAA"/>
    <property type="match status" value="1"/>
</dbReference>
<dbReference type="SUPFAM" id="SSF90123">
    <property type="entry name" value="ABC transporter transmembrane region"/>
    <property type="match status" value="1"/>
</dbReference>
<dbReference type="SUPFAM" id="SSF52540">
    <property type="entry name" value="P-loop containing nucleoside triphosphate hydrolases"/>
    <property type="match status" value="1"/>
</dbReference>
<dbReference type="PROSITE" id="PS50929">
    <property type="entry name" value="ABC_TM1F"/>
    <property type="match status" value="1"/>
</dbReference>
<dbReference type="PROSITE" id="PS00211">
    <property type="entry name" value="ABC_TRANSPORTER_1"/>
    <property type="match status" value="1"/>
</dbReference>
<dbReference type="PROSITE" id="PS50893">
    <property type="entry name" value="ABC_TRANSPORTER_2"/>
    <property type="match status" value="1"/>
</dbReference>
<dbReference type="PROSITE" id="PS51239">
    <property type="entry name" value="MSBA"/>
    <property type="match status" value="1"/>
</dbReference>
<evidence type="ECO:0000255" key="1">
    <source>
        <dbReference type="HAMAP-Rule" id="MF_01703"/>
    </source>
</evidence>
<reference key="1">
    <citation type="submission" date="2006-02" db="EMBL/GenBank/DDBJ databases">
        <title>Complete sequence of chromosome of Rhodoferax ferrireducens DSM 15236.</title>
        <authorList>
            <person name="Copeland A."/>
            <person name="Lucas S."/>
            <person name="Lapidus A."/>
            <person name="Barry K."/>
            <person name="Detter J.C."/>
            <person name="Glavina del Rio T."/>
            <person name="Hammon N."/>
            <person name="Israni S."/>
            <person name="Pitluck S."/>
            <person name="Brettin T."/>
            <person name="Bruce D."/>
            <person name="Han C."/>
            <person name="Tapia R."/>
            <person name="Gilna P."/>
            <person name="Kiss H."/>
            <person name="Schmutz J."/>
            <person name="Larimer F."/>
            <person name="Land M."/>
            <person name="Kyrpides N."/>
            <person name="Ivanova N."/>
            <person name="Richardson P."/>
        </authorList>
    </citation>
    <scope>NUCLEOTIDE SEQUENCE [LARGE SCALE GENOMIC DNA]</scope>
    <source>
        <strain>ATCC BAA-621 / DSM 15236 / T118</strain>
    </source>
</reference>
<proteinExistence type="inferred from homology"/>